<keyword id="KW-0997">Cell inner membrane</keyword>
<keyword id="KW-1003">Cell membrane</keyword>
<keyword id="KW-0472">Membrane</keyword>
<keyword id="KW-0812">Transmembrane</keyword>
<keyword id="KW-1133">Transmembrane helix</keyword>
<keyword id="KW-0813">Transport</keyword>
<organism>
    <name type="scientific">Salmonella typhimurium (strain SL1344)</name>
    <dbReference type="NCBI Taxonomy" id="216597"/>
    <lineage>
        <taxon>Bacteria</taxon>
        <taxon>Pseudomonadati</taxon>
        <taxon>Pseudomonadota</taxon>
        <taxon>Gammaproteobacteria</taxon>
        <taxon>Enterobacterales</taxon>
        <taxon>Enterobacteriaceae</taxon>
        <taxon>Salmonella</taxon>
    </lineage>
</organism>
<gene>
    <name type="primary">potB</name>
    <name type="ordered locus">SL1344_1162</name>
</gene>
<evidence type="ECO:0000250" key="1"/>
<evidence type="ECO:0000255" key="2"/>
<evidence type="ECO:0000255" key="3">
    <source>
        <dbReference type="PROSITE-ProRule" id="PRU00441"/>
    </source>
</evidence>
<evidence type="ECO:0000305" key="4"/>
<name>POTB_SALTS</name>
<dbReference type="EMBL" id="FQ312003">
    <property type="protein sequence ID" value="CBW17258.1"/>
    <property type="molecule type" value="Genomic_DNA"/>
</dbReference>
<dbReference type="EMBL" id="U51867">
    <property type="protein sequence ID" value="AAA97466.1"/>
    <property type="molecule type" value="Genomic_DNA"/>
</dbReference>
<dbReference type="PIR" id="S71034">
    <property type="entry name" value="S71034"/>
</dbReference>
<dbReference type="RefSeq" id="WP_000799391.1">
    <property type="nucleotide sequence ID" value="NZ_QASL01000001.1"/>
</dbReference>
<dbReference type="SMR" id="E1WF94"/>
<dbReference type="KEGG" id="sey:SL1344_1162"/>
<dbReference type="PATRIC" id="fig|216597.6.peg.1290"/>
<dbReference type="HOGENOM" id="CLU_016047_18_3_6"/>
<dbReference type="BioCyc" id="SENT216597:SL1344_RS06045-MONOMER"/>
<dbReference type="Proteomes" id="UP000008962">
    <property type="component" value="Chromosome"/>
</dbReference>
<dbReference type="GO" id="GO:0005886">
    <property type="term" value="C:plasma membrane"/>
    <property type="evidence" value="ECO:0007669"/>
    <property type="project" value="UniProtKB-SubCell"/>
</dbReference>
<dbReference type="GO" id="GO:0055085">
    <property type="term" value="P:transmembrane transport"/>
    <property type="evidence" value="ECO:0007669"/>
    <property type="project" value="InterPro"/>
</dbReference>
<dbReference type="CDD" id="cd06261">
    <property type="entry name" value="TM_PBP2"/>
    <property type="match status" value="1"/>
</dbReference>
<dbReference type="FunFam" id="1.10.3720.10:FF:000029">
    <property type="entry name" value="Spermidine/putrescine ABC transporter permease PotB"/>
    <property type="match status" value="1"/>
</dbReference>
<dbReference type="Gene3D" id="1.10.3720.10">
    <property type="entry name" value="MetI-like"/>
    <property type="match status" value="1"/>
</dbReference>
<dbReference type="InterPro" id="IPR000515">
    <property type="entry name" value="MetI-like"/>
</dbReference>
<dbReference type="InterPro" id="IPR035906">
    <property type="entry name" value="MetI-like_sf"/>
</dbReference>
<dbReference type="NCBIfam" id="NF007044">
    <property type="entry name" value="PRK09497.1"/>
    <property type="match status" value="1"/>
</dbReference>
<dbReference type="PANTHER" id="PTHR42929:SF1">
    <property type="entry name" value="INNER MEMBRANE ABC TRANSPORTER PERMEASE PROTEIN YDCU-RELATED"/>
    <property type="match status" value="1"/>
</dbReference>
<dbReference type="PANTHER" id="PTHR42929">
    <property type="entry name" value="INNER MEMBRANE ABC TRANSPORTER PERMEASE PROTEIN YDCU-RELATED-RELATED"/>
    <property type="match status" value="1"/>
</dbReference>
<dbReference type="Pfam" id="PF00528">
    <property type="entry name" value="BPD_transp_1"/>
    <property type="match status" value="1"/>
</dbReference>
<dbReference type="SUPFAM" id="SSF161098">
    <property type="entry name" value="MetI-like"/>
    <property type="match status" value="1"/>
</dbReference>
<dbReference type="PROSITE" id="PS50928">
    <property type="entry name" value="ABC_TM1"/>
    <property type="match status" value="1"/>
</dbReference>
<proteinExistence type="inferred from homology"/>
<reference key="1">
    <citation type="journal article" date="2012" name="Proc. Natl. Acad. Sci. U.S.A.">
        <title>The transcriptional landscape and small RNAs of Salmonella enterica serovar Typhimurium.</title>
        <authorList>
            <person name="Kroger C."/>
            <person name="Dillon S.C."/>
            <person name="Cameron A.D."/>
            <person name="Papenfort K."/>
            <person name="Sivasankaran S.K."/>
            <person name="Hokamp K."/>
            <person name="Chao Y."/>
            <person name="Sittka A."/>
            <person name="Hebrard M."/>
            <person name="Handler K."/>
            <person name="Colgan A."/>
            <person name="Leekitcharoenphon P."/>
            <person name="Langridge G.C."/>
            <person name="Lohan A.J."/>
            <person name="Loftus B."/>
            <person name="Lucchini S."/>
            <person name="Ussery D.W."/>
            <person name="Dorman C.J."/>
            <person name="Thomson N.R."/>
            <person name="Vogel J."/>
            <person name="Hinton J.C."/>
        </authorList>
    </citation>
    <scope>NUCLEOTIDE SEQUENCE [LARGE SCALE GENOMIC DNA]</scope>
    <source>
        <strain>SL1344</strain>
    </source>
</reference>
<reference key="2">
    <citation type="journal article" date="1996" name="Mol. Microbiol.">
        <title>Identification of a Salmonella virulence gene required for formation of filamentous structures containing lysosomal membrane glycoproteins within epithelial cells.</title>
        <authorList>
            <person name="Stein M.A."/>
            <person name="Leung K.Y."/>
            <person name="Zwick M."/>
            <person name="Garcia-Del Portillo F."/>
            <person name="Finlay B.B."/>
        </authorList>
    </citation>
    <scope>NUCLEOTIDE SEQUENCE [GENOMIC DNA] OF 276-287</scope>
    <source>
        <strain>SL1344</strain>
    </source>
</reference>
<comment type="function">
    <text>Required for the activity of the bacterial periplasmic transport system of putrescine and spermidine.</text>
</comment>
<comment type="subcellular location">
    <subcellularLocation>
        <location evidence="1">Cell inner membrane</location>
        <topology evidence="3">Multi-pass membrane protein</topology>
    </subcellularLocation>
</comment>
<comment type="similarity">
    <text evidence="4">Belongs to the binding-protein-dependent transport system permease family. CysTW subfamily.</text>
</comment>
<protein>
    <recommendedName>
        <fullName>Spermidine/putrescine transport system permease protein PotB</fullName>
    </recommendedName>
</protein>
<feature type="chain" id="PRO_0000406085" description="Spermidine/putrescine transport system permease protein PotB">
    <location>
        <begin position="1"/>
        <end position="287"/>
    </location>
</feature>
<feature type="topological domain" description="Cytoplasmic" evidence="2">
    <location>
        <begin position="1"/>
        <end position="10"/>
    </location>
</feature>
<feature type="transmembrane region" description="Helical" evidence="3">
    <location>
        <begin position="11"/>
        <end position="31"/>
    </location>
</feature>
<feature type="topological domain" description="Periplasmic" evidence="2">
    <location>
        <begin position="32"/>
        <end position="70"/>
    </location>
</feature>
<feature type="transmembrane region" description="Helical" evidence="3">
    <location>
        <begin position="71"/>
        <end position="91"/>
    </location>
</feature>
<feature type="topological domain" description="Cytoplasmic" evidence="2">
    <location>
        <begin position="92"/>
        <end position="99"/>
    </location>
</feature>
<feature type="transmembrane region" description="Helical" evidence="3">
    <location>
        <begin position="100"/>
        <end position="120"/>
    </location>
</feature>
<feature type="topological domain" description="Periplasmic" evidence="2">
    <location>
        <begin position="121"/>
        <end position="145"/>
    </location>
</feature>
<feature type="transmembrane region" description="Helical" evidence="3">
    <location>
        <begin position="146"/>
        <end position="166"/>
    </location>
</feature>
<feature type="topological domain" description="Cytoplasmic" evidence="2">
    <location>
        <begin position="167"/>
        <end position="197"/>
    </location>
</feature>
<feature type="transmembrane region" description="Helical" evidence="3">
    <location>
        <begin position="198"/>
        <end position="218"/>
    </location>
</feature>
<feature type="topological domain" description="Periplasmic" evidence="2">
    <location>
        <begin position="219"/>
        <end position="251"/>
    </location>
</feature>
<feature type="transmembrane region" description="Helical" evidence="3">
    <location>
        <begin position="252"/>
        <end position="272"/>
    </location>
</feature>
<feature type="topological domain" description="Cytoplasmic" evidence="2">
    <location>
        <begin position="273"/>
        <end position="287"/>
    </location>
</feature>
<feature type="domain" description="ABC transmembrane type-1" evidence="3">
    <location>
        <begin position="65"/>
        <end position="271"/>
    </location>
</feature>
<sequence>MKNTSKFQNVVIVTIVGWLVLFVFLPNLMIIGTSFLTRDDASFVKMVFTLDNYARLLDPLYFEVLLHSLNMALIATLSCLVLGYPFAWFLAKLPEKIRPLLLFLLIVPFWTNSLIRIYGLKIFLSTKGYLNEFLLWLGVIDTPIRIMFTPSAVIIGLVYILLPFMVMPLYSSIEKLDKPLLEAARDLGASKMQTFIRIIIPLTMPGIVAGCLLVMLPAMGLFYVSDLMGGAKNLLIGNVIKVQFLNIRDWPFGAATSITLTIVMGLMLLIYWRASRLLNKKVSDISD</sequence>
<accession>E1WF94</accession>
<accession>P0A2J7</accession>
<accession>Q56060</accession>